<protein>
    <recommendedName>
        <fullName>Phosphate transport system permease protein PstC</fullName>
    </recommendedName>
</protein>
<sequence>MAATKPAFNPPGKKGDIIFSVLVKLAALIVLLMLGGIIVSLIISSWPSIQKFGLAFLWTKEWDAPNDIYGALVPIYGTLVTSFIALLIAVPVSFGIALFLTELAPGWLKRPLGIAIELLAAIPSIVYGMWGLFIFAPLFAVYFQEPVGNIMSNIPIVGALFSGPAFGIGILAAGVILAIMIIPYIAAVMRDVFEQTPVMMKESAYGIGCTTWEVIWRIVLPFTKNGVIGGIMLGLGRALGETMAVTFIIGNTYQLDSASLYMPGNSITSALANEFAEAESGLHVAALMELGLILFVITFIVLAASKFMIMRLAKNEGAR</sequence>
<evidence type="ECO:0000255" key="1"/>
<evidence type="ECO:0000255" key="2">
    <source>
        <dbReference type="PROSITE-ProRule" id="PRU00441"/>
    </source>
</evidence>
<evidence type="ECO:0000305" key="3"/>
<reference key="1">
    <citation type="journal article" date="1985" name="J. Mol. Biol.">
        <title>Nucleotide sequence of the genes involved in phosphate transport and regulation of the phosphate regulon in Escherichia coli.</title>
        <authorList>
            <person name="Amemura M."/>
            <person name="Makino K."/>
            <person name="Shinagawa H."/>
            <person name="Kobayashi A."/>
            <person name="Nakata A."/>
        </authorList>
    </citation>
    <scope>NUCLEOTIDE SEQUENCE [GENOMIC DNA]</scope>
</reference>
<reference key="2">
    <citation type="journal article" date="1985" name="J. Bacteriol.">
        <title>Phosphate-specific transport system of Escherichia coli: nucleotide sequence and gene-polypeptide relationships.</title>
        <authorList>
            <person name="Surin B.P."/>
            <person name="Rosenberg H."/>
            <person name="Cox G.B."/>
        </authorList>
    </citation>
    <scope>NUCLEOTIDE SEQUENCE [GENOMIC DNA]</scope>
</reference>
<reference key="3">
    <citation type="journal article" date="1993" name="Genomics">
        <title>DNA sequence and analysis of 136 kilobases of the Escherichia coli genome: organizational symmetry around the origin of replication.</title>
        <authorList>
            <person name="Burland V.D."/>
            <person name="Plunkett G. III"/>
            <person name="Daniels D.L."/>
            <person name="Blattner F.R."/>
        </authorList>
    </citation>
    <scope>NUCLEOTIDE SEQUENCE [LARGE SCALE GENOMIC DNA]</scope>
    <source>
        <strain>K12 / MG1655 / ATCC 47076</strain>
    </source>
</reference>
<reference key="4">
    <citation type="journal article" date="1997" name="Science">
        <title>The complete genome sequence of Escherichia coli K-12.</title>
        <authorList>
            <person name="Blattner F.R."/>
            <person name="Plunkett G. III"/>
            <person name="Bloch C.A."/>
            <person name="Perna N.T."/>
            <person name="Burland V."/>
            <person name="Riley M."/>
            <person name="Collado-Vides J."/>
            <person name="Glasner J.D."/>
            <person name="Rode C.K."/>
            <person name="Mayhew G.F."/>
            <person name="Gregor J."/>
            <person name="Davis N.W."/>
            <person name="Kirkpatrick H.A."/>
            <person name="Goeden M.A."/>
            <person name="Rose D.J."/>
            <person name="Mau B."/>
            <person name="Shao Y."/>
        </authorList>
    </citation>
    <scope>NUCLEOTIDE SEQUENCE [LARGE SCALE GENOMIC DNA]</scope>
    <source>
        <strain>K12 / MG1655 / ATCC 47076</strain>
    </source>
</reference>
<reference key="5">
    <citation type="journal article" date="2006" name="Mol. Syst. Biol.">
        <title>Highly accurate genome sequences of Escherichia coli K-12 strains MG1655 and W3110.</title>
        <authorList>
            <person name="Hayashi K."/>
            <person name="Morooka N."/>
            <person name="Yamamoto Y."/>
            <person name="Fujita K."/>
            <person name="Isono K."/>
            <person name="Choi S."/>
            <person name="Ohtsubo E."/>
            <person name="Baba T."/>
            <person name="Wanner B.L."/>
            <person name="Mori H."/>
            <person name="Horiuchi T."/>
        </authorList>
    </citation>
    <scope>NUCLEOTIDE SEQUENCE [LARGE SCALE GENOMIC DNA]</scope>
    <source>
        <strain>K12 / W3110 / ATCC 27325 / DSM 5911</strain>
    </source>
</reference>
<reference key="6">
    <citation type="journal article" date="1992" name="J. Biol. Chem.">
        <title>Mutational analysis of the Escherichia coli phosphate-specific transport system, a member of the traffic ATPase (or ABC) family of membrane transporters. A role for proline residues in transmembrane helices.</title>
        <authorList>
            <person name="Webb D.C."/>
            <person name="Rosenberg H."/>
            <person name="Cox G.B."/>
        </authorList>
    </citation>
    <scope>MUTAGENESIS</scope>
</reference>
<reference key="7">
    <citation type="journal article" date="2005" name="Science">
        <title>Global topology analysis of the Escherichia coli inner membrane proteome.</title>
        <authorList>
            <person name="Daley D.O."/>
            <person name="Rapp M."/>
            <person name="Granseth E."/>
            <person name="Melen K."/>
            <person name="Drew D."/>
            <person name="von Heijne G."/>
        </authorList>
    </citation>
    <scope>TOPOLOGY [LARGE SCALE ANALYSIS]</scope>
    <source>
        <strain>K12 / MG1655 / ATCC 47076</strain>
    </source>
</reference>
<gene>
    <name type="primary">pstC</name>
    <name type="synonym">phoW</name>
    <name type="ordered locus">b3727</name>
    <name type="ordered locus">JW3705</name>
</gene>
<feature type="chain" id="PRO_0000060207" description="Phosphate transport system permease protein PstC">
    <location>
        <begin position="1"/>
        <end position="319"/>
    </location>
</feature>
<feature type="topological domain" description="Cytoplasmic" evidence="1">
    <location>
        <begin position="1"/>
        <end position="24"/>
    </location>
</feature>
<feature type="transmembrane region" description="Helical" evidence="2">
    <location>
        <begin position="25"/>
        <end position="44"/>
    </location>
</feature>
<feature type="topological domain" description="Periplasmic" evidence="1">
    <location>
        <begin position="45"/>
        <end position="74"/>
    </location>
</feature>
<feature type="transmembrane region" description="Helical" evidence="2">
    <location>
        <begin position="75"/>
        <end position="94"/>
    </location>
</feature>
<feature type="topological domain" description="Cytoplasmic" evidence="1">
    <location>
        <begin position="95"/>
        <end position="117"/>
    </location>
</feature>
<feature type="transmembrane region" description="Helical" evidence="2">
    <location>
        <begin position="118"/>
        <end position="137"/>
    </location>
</feature>
<feature type="topological domain" description="Periplasmic" evidence="1">
    <location>
        <begin position="138"/>
        <end position="167"/>
    </location>
</feature>
<feature type="transmembrane region" description="Helical" evidence="2">
    <location>
        <begin position="168"/>
        <end position="187"/>
    </location>
</feature>
<feature type="topological domain" description="Cytoplasmic" evidence="1">
    <location>
        <begin position="188"/>
        <end position="232"/>
    </location>
</feature>
<feature type="transmembrane region" description="Helical" evidence="2">
    <location>
        <begin position="233"/>
        <end position="252"/>
    </location>
</feature>
<feature type="topological domain" description="Periplasmic" evidence="1">
    <location>
        <begin position="253"/>
        <end position="283"/>
    </location>
</feature>
<feature type="transmembrane region" description="Helical" evidence="2">
    <location>
        <begin position="284"/>
        <end position="303"/>
    </location>
</feature>
<feature type="topological domain" description="Cytoplasmic" evidence="1">
    <location>
        <begin position="304"/>
        <end position="319"/>
    </location>
</feature>
<feature type="domain" description="ABC transmembrane type-1" evidence="2">
    <location>
        <begin position="75"/>
        <end position="305"/>
    </location>
</feature>
<dbReference type="EMBL" id="X02723">
    <property type="protein sequence ID" value="CAA26507.1"/>
    <property type="molecule type" value="Genomic_DNA"/>
</dbReference>
<dbReference type="EMBL" id="K01992">
    <property type="protein sequence ID" value="AAA24379.1"/>
    <property type="molecule type" value="Genomic_DNA"/>
</dbReference>
<dbReference type="EMBL" id="L10328">
    <property type="protein sequence ID" value="AAA62078.1"/>
    <property type="molecule type" value="Genomic_DNA"/>
</dbReference>
<dbReference type="EMBL" id="U00096">
    <property type="protein sequence ID" value="AAC76750.1"/>
    <property type="molecule type" value="Genomic_DNA"/>
</dbReference>
<dbReference type="EMBL" id="AP009048">
    <property type="protein sequence ID" value="BAE77561.1"/>
    <property type="molecule type" value="Genomic_DNA"/>
</dbReference>
<dbReference type="PIR" id="H65175">
    <property type="entry name" value="BVECPW"/>
</dbReference>
<dbReference type="RefSeq" id="NP_418183.1">
    <property type="nucleotide sequence ID" value="NC_000913.3"/>
</dbReference>
<dbReference type="RefSeq" id="WP_000741620.1">
    <property type="nucleotide sequence ID" value="NZ_STEB01000015.1"/>
</dbReference>
<dbReference type="BioGRID" id="4262140">
    <property type="interactions" value="41"/>
</dbReference>
<dbReference type="ComplexPortal" id="CPX-4381">
    <property type="entry name" value="Phosphate ABC transporter complex"/>
</dbReference>
<dbReference type="FunCoup" id="P0AGH8">
    <property type="interactions" value="546"/>
</dbReference>
<dbReference type="STRING" id="511145.b3727"/>
<dbReference type="TCDB" id="3.A.1.7.1">
    <property type="family name" value="the atp-binding cassette (abc) superfamily"/>
</dbReference>
<dbReference type="PaxDb" id="511145-b3727"/>
<dbReference type="EnsemblBacteria" id="AAC76750">
    <property type="protein sequence ID" value="AAC76750"/>
    <property type="gene ID" value="b3727"/>
</dbReference>
<dbReference type="GeneID" id="93778214"/>
<dbReference type="GeneID" id="948238"/>
<dbReference type="KEGG" id="ecj:JW3705"/>
<dbReference type="KEGG" id="eco:b3727"/>
<dbReference type="KEGG" id="ecoc:C3026_20200"/>
<dbReference type="PATRIC" id="fig|1411691.4.peg.2973"/>
<dbReference type="EchoBASE" id="EB0777"/>
<dbReference type="eggNOG" id="COG0573">
    <property type="taxonomic scope" value="Bacteria"/>
</dbReference>
<dbReference type="HOGENOM" id="CLU_033621_1_3_6"/>
<dbReference type="InParanoid" id="P0AGH8"/>
<dbReference type="OMA" id="GNIAIEM"/>
<dbReference type="OrthoDB" id="9785113at2"/>
<dbReference type="PhylomeDB" id="P0AGH8"/>
<dbReference type="BioCyc" id="EcoCyc:PSTC-MONOMER"/>
<dbReference type="BioCyc" id="MetaCyc:PSTC-MONOMER"/>
<dbReference type="PHI-base" id="PHI:8083"/>
<dbReference type="PRO" id="PR:P0AGH8"/>
<dbReference type="Proteomes" id="UP000000625">
    <property type="component" value="Chromosome"/>
</dbReference>
<dbReference type="GO" id="GO:0055052">
    <property type="term" value="C:ATP-binding cassette (ABC) transporter complex, substrate-binding subunit-containing"/>
    <property type="evidence" value="ECO:0000303"/>
    <property type="project" value="ComplexPortal"/>
</dbReference>
<dbReference type="GO" id="GO:0016020">
    <property type="term" value="C:membrane"/>
    <property type="evidence" value="ECO:0000303"/>
    <property type="project" value="ComplexPortal"/>
</dbReference>
<dbReference type="GO" id="GO:0005886">
    <property type="term" value="C:plasma membrane"/>
    <property type="evidence" value="ECO:0000314"/>
    <property type="project" value="EcoCyc"/>
</dbReference>
<dbReference type="GO" id="GO:0005315">
    <property type="term" value="F:phosphate transmembrane transporter activity"/>
    <property type="evidence" value="ECO:0007669"/>
    <property type="project" value="InterPro"/>
</dbReference>
<dbReference type="GO" id="GO:0035435">
    <property type="term" value="P:phosphate ion transmembrane transport"/>
    <property type="evidence" value="ECO:0000315"/>
    <property type="project" value="EcoCyc"/>
</dbReference>
<dbReference type="GO" id="GO:0009314">
    <property type="term" value="P:response to radiation"/>
    <property type="evidence" value="ECO:0000315"/>
    <property type="project" value="EcoCyc"/>
</dbReference>
<dbReference type="CDD" id="cd06261">
    <property type="entry name" value="TM_PBP2"/>
    <property type="match status" value="1"/>
</dbReference>
<dbReference type="Gene3D" id="1.10.3720.10">
    <property type="entry name" value="MetI-like"/>
    <property type="match status" value="1"/>
</dbReference>
<dbReference type="InterPro" id="IPR000515">
    <property type="entry name" value="MetI-like"/>
</dbReference>
<dbReference type="InterPro" id="IPR035906">
    <property type="entry name" value="MetI-like_sf"/>
</dbReference>
<dbReference type="InterPro" id="IPR011864">
    <property type="entry name" value="Phosphate_PstC"/>
</dbReference>
<dbReference type="InterPro" id="IPR051124">
    <property type="entry name" value="Phosphate_Transport_Permease"/>
</dbReference>
<dbReference type="NCBIfam" id="TIGR02138">
    <property type="entry name" value="phosphate_pstC"/>
    <property type="match status" value="1"/>
</dbReference>
<dbReference type="NCBIfam" id="NF008435">
    <property type="entry name" value="PRK11275.1"/>
    <property type="match status" value="1"/>
</dbReference>
<dbReference type="PANTHER" id="PTHR30425">
    <property type="entry name" value="PHOSPHATE TRANSPORT SYSTEM PERMEASE PROTEIN PST"/>
    <property type="match status" value="1"/>
</dbReference>
<dbReference type="PANTHER" id="PTHR30425:SF1">
    <property type="entry name" value="PHOSPHATE TRANSPORT SYSTEM PERMEASE PROTEIN PSTC"/>
    <property type="match status" value="1"/>
</dbReference>
<dbReference type="Pfam" id="PF00528">
    <property type="entry name" value="BPD_transp_1"/>
    <property type="match status" value="1"/>
</dbReference>
<dbReference type="SUPFAM" id="SSF161098">
    <property type="entry name" value="MetI-like"/>
    <property type="match status" value="1"/>
</dbReference>
<dbReference type="PROSITE" id="PS50928">
    <property type="entry name" value="ABC_TM1"/>
    <property type="match status" value="1"/>
</dbReference>
<comment type="function">
    <text>Part of the binding-protein-dependent transport system for phosphate; probably responsible for the translocation of the substrate across the membrane.</text>
</comment>
<comment type="subcellular location">
    <subcellularLocation>
        <location>Cell inner membrane</location>
        <topology>Multi-pass membrane protein</topology>
    </subcellularLocation>
</comment>
<comment type="similarity">
    <text evidence="3">Belongs to the binding-protein-dependent transport system permease family. CysTW subfamily.</text>
</comment>
<name>PSTC_ECOLI</name>
<accession>P0AGH8</accession>
<accession>P07653</accession>
<accession>Q2M845</accession>
<keyword id="KW-0997">Cell inner membrane</keyword>
<keyword id="KW-1003">Cell membrane</keyword>
<keyword id="KW-0472">Membrane</keyword>
<keyword id="KW-0592">Phosphate transport</keyword>
<keyword id="KW-1185">Reference proteome</keyword>
<keyword id="KW-0812">Transmembrane</keyword>
<keyword id="KW-1133">Transmembrane helix</keyword>
<keyword id="KW-0813">Transport</keyword>
<proteinExistence type="evidence at protein level"/>
<organism>
    <name type="scientific">Escherichia coli (strain K12)</name>
    <dbReference type="NCBI Taxonomy" id="83333"/>
    <lineage>
        <taxon>Bacteria</taxon>
        <taxon>Pseudomonadati</taxon>
        <taxon>Pseudomonadota</taxon>
        <taxon>Gammaproteobacteria</taxon>
        <taxon>Enterobacterales</taxon>
        <taxon>Enterobacteriaceae</taxon>
        <taxon>Escherichia</taxon>
    </lineage>
</organism>